<organism>
    <name type="scientific">Desulfitobacterium hafniense (strain Y51)</name>
    <dbReference type="NCBI Taxonomy" id="138119"/>
    <lineage>
        <taxon>Bacteria</taxon>
        <taxon>Bacillati</taxon>
        <taxon>Bacillota</taxon>
        <taxon>Clostridia</taxon>
        <taxon>Eubacteriales</taxon>
        <taxon>Desulfitobacteriaceae</taxon>
        <taxon>Desulfitobacterium</taxon>
    </lineage>
</organism>
<evidence type="ECO:0000255" key="1">
    <source>
        <dbReference type="HAMAP-Rule" id="MF_00020"/>
    </source>
</evidence>
<keyword id="KW-0067">ATP-binding</keyword>
<keyword id="KW-0963">Cytoplasm</keyword>
<keyword id="KW-0418">Kinase</keyword>
<keyword id="KW-0460">Magnesium</keyword>
<keyword id="KW-0479">Metal-binding</keyword>
<keyword id="KW-0547">Nucleotide-binding</keyword>
<keyword id="KW-1185">Reference proteome</keyword>
<keyword id="KW-0808">Transferase</keyword>
<gene>
    <name evidence="1" type="primary">ackA</name>
    <name type="ordered locus">DSY2668</name>
</gene>
<feature type="chain" id="PRO_1000002229" description="Acetate kinase">
    <location>
        <begin position="1"/>
        <end position="399"/>
    </location>
</feature>
<feature type="active site" description="Proton donor/acceptor" evidence="1">
    <location>
        <position position="148"/>
    </location>
</feature>
<feature type="binding site" evidence="1">
    <location>
        <position position="7"/>
    </location>
    <ligand>
        <name>Mg(2+)</name>
        <dbReference type="ChEBI" id="CHEBI:18420"/>
    </ligand>
</feature>
<feature type="binding site" evidence="1">
    <location>
        <position position="14"/>
    </location>
    <ligand>
        <name>ATP</name>
        <dbReference type="ChEBI" id="CHEBI:30616"/>
    </ligand>
</feature>
<feature type="binding site" evidence="1">
    <location>
        <position position="91"/>
    </location>
    <ligand>
        <name>substrate</name>
    </ligand>
</feature>
<feature type="binding site" evidence="1">
    <location>
        <begin position="208"/>
        <end position="212"/>
    </location>
    <ligand>
        <name>ATP</name>
        <dbReference type="ChEBI" id="CHEBI:30616"/>
    </ligand>
</feature>
<feature type="binding site" evidence="1">
    <location>
        <begin position="283"/>
        <end position="285"/>
    </location>
    <ligand>
        <name>ATP</name>
        <dbReference type="ChEBI" id="CHEBI:30616"/>
    </ligand>
</feature>
<feature type="binding site" evidence="1">
    <location>
        <begin position="331"/>
        <end position="335"/>
    </location>
    <ligand>
        <name>ATP</name>
        <dbReference type="ChEBI" id="CHEBI:30616"/>
    </ligand>
</feature>
<feature type="binding site" evidence="1">
    <location>
        <position position="384"/>
    </location>
    <ligand>
        <name>Mg(2+)</name>
        <dbReference type="ChEBI" id="CHEBI:18420"/>
    </ligand>
</feature>
<feature type="site" description="Transition state stabilizer" evidence="1">
    <location>
        <position position="180"/>
    </location>
</feature>
<feature type="site" description="Transition state stabilizer" evidence="1">
    <location>
        <position position="241"/>
    </location>
</feature>
<accession>Q24U35</accession>
<comment type="function">
    <text evidence="1">Catalyzes the formation of acetyl phosphate from acetate and ATP. Can also catalyze the reverse reaction.</text>
</comment>
<comment type="catalytic activity">
    <reaction evidence="1">
        <text>acetate + ATP = acetyl phosphate + ADP</text>
        <dbReference type="Rhea" id="RHEA:11352"/>
        <dbReference type="ChEBI" id="CHEBI:22191"/>
        <dbReference type="ChEBI" id="CHEBI:30089"/>
        <dbReference type="ChEBI" id="CHEBI:30616"/>
        <dbReference type="ChEBI" id="CHEBI:456216"/>
        <dbReference type="EC" id="2.7.2.1"/>
    </reaction>
</comment>
<comment type="cofactor">
    <cofactor evidence="1">
        <name>Mg(2+)</name>
        <dbReference type="ChEBI" id="CHEBI:18420"/>
    </cofactor>
    <cofactor evidence="1">
        <name>Mn(2+)</name>
        <dbReference type="ChEBI" id="CHEBI:29035"/>
    </cofactor>
    <text evidence="1">Mg(2+). Can also accept Mn(2+).</text>
</comment>
<comment type="pathway">
    <text evidence="1">Metabolic intermediate biosynthesis; acetyl-CoA biosynthesis; acetyl-CoA from acetate: step 1/2.</text>
</comment>
<comment type="subunit">
    <text evidence="1">Homodimer.</text>
</comment>
<comment type="subcellular location">
    <subcellularLocation>
        <location evidence="1">Cytoplasm</location>
    </subcellularLocation>
</comment>
<comment type="similarity">
    <text evidence="1">Belongs to the acetokinase family.</text>
</comment>
<reference key="1">
    <citation type="journal article" date="2006" name="J. Bacteriol.">
        <title>Complete genome sequence of the dehalorespiring bacterium Desulfitobacterium hafniense Y51 and comparison with Dehalococcoides ethenogenes 195.</title>
        <authorList>
            <person name="Nonaka H."/>
            <person name="Keresztes G."/>
            <person name="Shinoda Y."/>
            <person name="Ikenaga Y."/>
            <person name="Abe M."/>
            <person name="Naito K."/>
            <person name="Inatomi K."/>
            <person name="Furukawa K."/>
            <person name="Inui M."/>
            <person name="Yukawa H."/>
        </authorList>
    </citation>
    <scope>NUCLEOTIDE SEQUENCE [LARGE SCALE GENOMIC DNA]</scope>
    <source>
        <strain>Y51</strain>
    </source>
</reference>
<dbReference type="EC" id="2.7.2.1" evidence="1"/>
<dbReference type="EMBL" id="AP008230">
    <property type="protein sequence ID" value="BAE84457.1"/>
    <property type="molecule type" value="Genomic_DNA"/>
</dbReference>
<dbReference type="RefSeq" id="WP_011460506.1">
    <property type="nucleotide sequence ID" value="NC_007907.1"/>
</dbReference>
<dbReference type="SMR" id="Q24U35"/>
<dbReference type="STRING" id="138119.DSY2668"/>
<dbReference type="KEGG" id="dsy:DSY2668"/>
<dbReference type="eggNOG" id="COG0282">
    <property type="taxonomic scope" value="Bacteria"/>
</dbReference>
<dbReference type="HOGENOM" id="CLU_020352_0_1_9"/>
<dbReference type="UniPathway" id="UPA00340">
    <property type="reaction ID" value="UER00458"/>
</dbReference>
<dbReference type="Proteomes" id="UP000001946">
    <property type="component" value="Chromosome"/>
</dbReference>
<dbReference type="GO" id="GO:0005737">
    <property type="term" value="C:cytoplasm"/>
    <property type="evidence" value="ECO:0007669"/>
    <property type="project" value="UniProtKB-SubCell"/>
</dbReference>
<dbReference type="GO" id="GO:0008776">
    <property type="term" value="F:acetate kinase activity"/>
    <property type="evidence" value="ECO:0007669"/>
    <property type="project" value="UniProtKB-UniRule"/>
</dbReference>
<dbReference type="GO" id="GO:0005524">
    <property type="term" value="F:ATP binding"/>
    <property type="evidence" value="ECO:0007669"/>
    <property type="project" value="UniProtKB-KW"/>
</dbReference>
<dbReference type="GO" id="GO:0000287">
    <property type="term" value="F:magnesium ion binding"/>
    <property type="evidence" value="ECO:0007669"/>
    <property type="project" value="UniProtKB-UniRule"/>
</dbReference>
<dbReference type="GO" id="GO:0006083">
    <property type="term" value="P:acetate metabolic process"/>
    <property type="evidence" value="ECO:0007669"/>
    <property type="project" value="TreeGrafter"/>
</dbReference>
<dbReference type="GO" id="GO:0006085">
    <property type="term" value="P:acetyl-CoA biosynthetic process"/>
    <property type="evidence" value="ECO:0007669"/>
    <property type="project" value="UniProtKB-UniRule"/>
</dbReference>
<dbReference type="CDD" id="cd24010">
    <property type="entry name" value="ASKHA_NBD_AcK_PK"/>
    <property type="match status" value="1"/>
</dbReference>
<dbReference type="Gene3D" id="3.30.420.40">
    <property type="match status" value="2"/>
</dbReference>
<dbReference type="HAMAP" id="MF_00020">
    <property type="entry name" value="Acetate_kinase"/>
    <property type="match status" value="1"/>
</dbReference>
<dbReference type="InterPro" id="IPR004372">
    <property type="entry name" value="Ac/propionate_kinase"/>
</dbReference>
<dbReference type="InterPro" id="IPR000890">
    <property type="entry name" value="Aliphatic_acid_kin_short-chain"/>
</dbReference>
<dbReference type="InterPro" id="IPR023865">
    <property type="entry name" value="Aliphatic_acid_kinase_CS"/>
</dbReference>
<dbReference type="InterPro" id="IPR043129">
    <property type="entry name" value="ATPase_NBD"/>
</dbReference>
<dbReference type="NCBIfam" id="TIGR00016">
    <property type="entry name" value="ackA"/>
    <property type="match status" value="1"/>
</dbReference>
<dbReference type="PANTHER" id="PTHR21060">
    <property type="entry name" value="ACETATE KINASE"/>
    <property type="match status" value="1"/>
</dbReference>
<dbReference type="PANTHER" id="PTHR21060:SF15">
    <property type="entry name" value="ACETATE KINASE-RELATED"/>
    <property type="match status" value="1"/>
</dbReference>
<dbReference type="Pfam" id="PF00871">
    <property type="entry name" value="Acetate_kinase"/>
    <property type="match status" value="1"/>
</dbReference>
<dbReference type="PIRSF" id="PIRSF000722">
    <property type="entry name" value="Acetate_prop_kin"/>
    <property type="match status" value="1"/>
</dbReference>
<dbReference type="PRINTS" id="PR00471">
    <property type="entry name" value="ACETATEKNASE"/>
</dbReference>
<dbReference type="SUPFAM" id="SSF53067">
    <property type="entry name" value="Actin-like ATPase domain"/>
    <property type="match status" value="2"/>
</dbReference>
<dbReference type="PROSITE" id="PS01075">
    <property type="entry name" value="ACETATE_KINASE_1"/>
    <property type="match status" value="1"/>
</dbReference>
<dbReference type="PROSITE" id="PS01076">
    <property type="entry name" value="ACETATE_KINASE_2"/>
    <property type="match status" value="1"/>
</dbReference>
<name>ACKA_DESHY</name>
<sequence>MKILVINCGSSSLKYQLLDMDTQTPIAKGLVERIGLPGAVLTHRPADGEKEIITAEIPNHTIAIQLVLDALVNPEYGVVKSLEEIGSVGHRVVHGGEKFASSVLITDEVMQAIEECIELAPLHNPPNIAGIEACQKLMPGVPQVAVFDTAFHQTMPPHAYLYGLPYEFYEKYKIRKYGFHGTSHKYVSQRAAKLLNRPAEGLKLISCHLGNGSSITAIKDGKSIETSMGFTPLEGLMMGTRSGDLDPAIVSFIQQKENLSSDEVNDFLNKKCGVLGLSGVSSDFRDIEQARDQGNYRAALALDVFSHDVKKYIGSYAAVLNGADAIIFTAGLGENSAEMREAVVDGLQYLGAKLDLEKNKVRGKEADISAPEATCRVLVIPTNEELMIALDTLDIIQKG</sequence>
<protein>
    <recommendedName>
        <fullName evidence="1">Acetate kinase</fullName>
        <ecNumber evidence="1">2.7.2.1</ecNumber>
    </recommendedName>
    <alternativeName>
        <fullName evidence="1">Acetokinase</fullName>
    </alternativeName>
</protein>
<proteinExistence type="inferred from homology"/>